<proteinExistence type="inferred from homology"/>
<organism>
    <name type="scientific">Colwellia psychrerythraea (strain 34H / ATCC BAA-681)</name>
    <name type="common">Vibrio psychroerythus</name>
    <dbReference type="NCBI Taxonomy" id="167879"/>
    <lineage>
        <taxon>Bacteria</taxon>
        <taxon>Pseudomonadati</taxon>
        <taxon>Pseudomonadota</taxon>
        <taxon>Gammaproteobacteria</taxon>
        <taxon>Alteromonadales</taxon>
        <taxon>Colwelliaceae</taxon>
        <taxon>Colwellia</taxon>
    </lineage>
</organism>
<evidence type="ECO:0000255" key="1">
    <source>
        <dbReference type="HAMAP-Rule" id="MF_01241"/>
    </source>
</evidence>
<comment type="function">
    <text evidence="1">Catalyzes the reversible isomerization-deamination of glucosamine 6-phosphate (GlcN6P) to form fructose 6-phosphate (Fru6P) and ammonium ion.</text>
</comment>
<comment type="catalytic activity">
    <reaction evidence="1">
        <text>alpha-D-glucosamine 6-phosphate + H2O = beta-D-fructose 6-phosphate + NH4(+)</text>
        <dbReference type="Rhea" id="RHEA:12172"/>
        <dbReference type="ChEBI" id="CHEBI:15377"/>
        <dbReference type="ChEBI" id="CHEBI:28938"/>
        <dbReference type="ChEBI" id="CHEBI:57634"/>
        <dbReference type="ChEBI" id="CHEBI:75989"/>
        <dbReference type="EC" id="3.5.99.6"/>
    </reaction>
</comment>
<comment type="pathway">
    <text evidence="1">Amino-sugar metabolism; N-acetylneuraminate degradation; D-fructose 6-phosphate from N-acetylneuraminate: step 5/5.</text>
</comment>
<comment type="subunit">
    <text evidence="1">Homohexamer.</text>
</comment>
<comment type="similarity">
    <text evidence="1">Belongs to the glucosamine/galactosamine-6-phosphate isomerase family. NagB subfamily.</text>
</comment>
<name>NAGB_COLP3</name>
<feature type="chain" id="PRO_1000066974" description="Glucosamine-6-phosphate deaminase">
    <location>
        <begin position="1"/>
        <end position="268"/>
    </location>
</feature>
<feature type="active site" description="Proton acceptor; for enolization step" evidence="1">
    <location>
        <position position="67"/>
    </location>
</feature>
<feature type="active site" description="For ring-opening step" evidence="1">
    <location>
        <position position="137"/>
    </location>
</feature>
<feature type="active site" description="Proton acceptor; for ring-opening step" evidence="1">
    <location>
        <position position="139"/>
    </location>
</feature>
<feature type="active site" description="For ring-opening step" evidence="1">
    <location>
        <position position="144"/>
    </location>
</feature>
<gene>
    <name evidence="1" type="primary">nagB</name>
    <name type="ordered locus">CPS_1008</name>
</gene>
<reference key="1">
    <citation type="journal article" date="2005" name="Proc. Natl. Acad. Sci. U.S.A.">
        <title>The psychrophilic lifestyle as revealed by the genome sequence of Colwellia psychrerythraea 34H through genomic and proteomic analyses.</title>
        <authorList>
            <person name="Methe B.A."/>
            <person name="Nelson K.E."/>
            <person name="Deming J.W."/>
            <person name="Momen B."/>
            <person name="Melamud E."/>
            <person name="Zhang X."/>
            <person name="Moult J."/>
            <person name="Madupu R."/>
            <person name="Nelson W.C."/>
            <person name="Dodson R.J."/>
            <person name="Brinkac L.M."/>
            <person name="Daugherty S.C."/>
            <person name="Durkin A.S."/>
            <person name="DeBoy R.T."/>
            <person name="Kolonay J.F."/>
            <person name="Sullivan S.A."/>
            <person name="Zhou L."/>
            <person name="Davidsen T.M."/>
            <person name="Wu M."/>
            <person name="Huston A.L."/>
            <person name="Lewis M."/>
            <person name="Weaver B."/>
            <person name="Weidman J.F."/>
            <person name="Khouri H."/>
            <person name="Utterback T.R."/>
            <person name="Feldblyum T.V."/>
            <person name="Fraser C.M."/>
        </authorList>
    </citation>
    <scope>NUCLEOTIDE SEQUENCE [LARGE SCALE GENOMIC DNA]</scope>
    <source>
        <strain>34H / ATCC BAA-681</strain>
    </source>
</reference>
<dbReference type="EC" id="3.5.99.6" evidence="1"/>
<dbReference type="EMBL" id="CP000083">
    <property type="protein sequence ID" value="AAZ24456.1"/>
    <property type="molecule type" value="Genomic_DNA"/>
</dbReference>
<dbReference type="RefSeq" id="WP_011041851.1">
    <property type="nucleotide sequence ID" value="NC_003910.7"/>
</dbReference>
<dbReference type="SMR" id="Q487K8"/>
<dbReference type="STRING" id="167879.CPS_1008"/>
<dbReference type="KEGG" id="cps:CPS_1008"/>
<dbReference type="eggNOG" id="COG0363">
    <property type="taxonomic scope" value="Bacteria"/>
</dbReference>
<dbReference type="HOGENOM" id="CLU_049611_1_1_6"/>
<dbReference type="UniPathway" id="UPA00629">
    <property type="reaction ID" value="UER00684"/>
</dbReference>
<dbReference type="Proteomes" id="UP000000547">
    <property type="component" value="Chromosome"/>
</dbReference>
<dbReference type="GO" id="GO:0005737">
    <property type="term" value="C:cytoplasm"/>
    <property type="evidence" value="ECO:0007669"/>
    <property type="project" value="TreeGrafter"/>
</dbReference>
<dbReference type="GO" id="GO:0004342">
    <property type="term" value="F:glucosamine-6-phosphate deaminase activity"/>
    <property type="evidence" value="ECO:0007669"/>
    <property type="project" value="UniProtKB-UniRule"/>
</dbReference>
<dbReference type="GO" id="GO:0042802">
    <property type="term" value="F:identical protein binding"/>
    <property type="evidence" value="ECO:0007669"/>
    <property type="project" value="TreeGrafter"/>
</dbReference>
<dbReference type="GO" id="GO:0005975">
    <property type="term" value="P:carbohydrate metabolic process"/>
    <property type="evidence" value="ECO:0007669"/>
    <property type="project" value="InterPro"/>
</dbReference>
<dbReference type="GO" id="GO:0006043">
    <property type="term" value="P:glucosamine catabolic process"/>
    <property type="evidence" value="ECO:0007669"/>
    <property type="project" value="TreeGrafter"/>
</dbReference>
<dbReference type="GO" id="GO:0006046">
    <property type="term" value="P:N-acetylglucosamine catabolic process"/>
    <property type="evidence" value="ECO:0007669"/>
    <property type="project" value="TreeGrafter"/>
</dbReference>
<dbReference type="GO" id="GO:0019262">
    <property type="term" value="P:N-acetylneuraminate catabolic process"/>
    <property type="evidence" value="ECO:0007669"/>
    <property type="project" value="UniProtKB-UniRule"/>
</dbReference>
<dbReference type="CDD" id="cd01399">
    <property type="entry name" value="GlcN6P_deaminase"/>
    <property type="match status" value="1"/>
</dbReference>
<dbReference type="FunFam" id="3.40.50.1360:FF:000003">
    <property type="entry name" value="Glucosamine-6-phosphate deaminase"/>
    <property type="match status" value="1"/>
</dbReference>
<dbReference type="Gene3D" id="3.40.50.1360">
    <property type="match status" value="1"/>
</dbReference>
<dbReference type="HAMAP" id="MF_01241">
    <property type="entry name" value="GlcN6P_deamin"/>
    <property type="match status" value="1"/>
</dbReference>
<dbReference type="InterPro" id="IPR006148">
    <property type="entry name" value="Glc/Gal-6P_isomerase"/>
</dbReference>
<dbReference type="InterPro" id="IPR004547">
    <property type="entry name" value="Glucosamine6P_isomerase"/>
</dbReference>
<dbReference type="InterPro" id="IPR018321">
    <property type="entry name" value="Glucosamine6P_isomerase_CS"/>
</dbReference>
<dbReference type="InterPro" id="IPR037171">
    <property type="entry name" value="NagB/RpiA_transferase-like"/>
</dbReference>
<dbReference type="NCBIfam" id="TIGR00502">
    <property type="entry name" value="nagB"/>
    <property type="match status" value="1"/>
</dbReference>
<dbReference type="PANTHER" id="PTHR11280">
    <property type="entry name" value="GLUCOSAMINE-6-PHOSPHATE ISOMERASE"/>
    <property type="match status" value="1"/>
</dbReference>
<dbReference type="PANTHER" id="PTHR11280:SF5">
    <property type="entry name" value="GLUCOSAMINE-6-PHOSPHATE ISOMERASE"/>
    <property type="match status" value="1"/>
</dbReference>
<dbReference type="Pfam" id="PF01182">
    <property type="entry name" value="Glucosamine_iso"/>
    <property type="match status" value="1"/>
</dbReference>
<dbReference type="SUPFAM" id="SSF100950">
    <property type="entry name" value="NagB/RpiA/CoA transferase-like"/>
    <property type="match status" value="1"/>
</dbReference>
<dbReference type="PROSITE" id="PS01161">
    <property type="entry name" value="GLC_GALNAC_ISOMERASE"/>
    <property type="match status" value="1"/>
</dbReference>
<protein>
    <recommendedName>
        <fullName evidence="1">Glucosamine-6-phosphate deaminase</fullName>
        <ecNumber evidence="1">3.5.99.6</ecNumber>
    </recommendedName>
    <alternativeName>
        <fullName evidence="1">GlcN6P deaminase</fullName>
        <shortName evidence="1">GNPDA</shortName>
    </alternativeName>
    <alternativeName>
        <fullName evidence="1">Glucosamine-6-phosphate isomerase</fullName>
    </alternativeName>
</protein>
<accession>Q487K8</accession>
<keyword id="KW-0119">Carbohydrate metabolism</keyword>
<keyword id="KW-0378">Hydrolase</keyword>
<sequence length="268" mass="29795">MQVIIFDNAQQVAENAAEWVAELINKKSNPVLGLATGSTPISLYQELVNKYKAGELSFSNTTSFNLDEYLGINEKNQQSYRHFMNENLFNHVDINKLKTFLPTCNQGENPREQGLDYEDKIAQAGGIDLQILGIGANGHIGFNEPTSSLASRTRIKTLTQQTLNDNSRLFAADEFQPTLAMTMGIATILDARYVLLMATGKSKAKAVKEMVTGPLSAVCPASSLQLHENAIVLLDKEAASELEDHEYYVWADKQNVKINQEFGLYHNY</sequence>